<protein>
    <recommendedName>
        <fullName evidence="1">Spermidine/putrescine import ATP-binding protein PotA 1</fullName>
        <ecNumber evidence="1">7.6.2.11</ecNumber>
    </recommendedName>
</protein>
<gene>
    <name evidence="1" type="primary">potA1</name>
    <name type="ordered locus">PA0206</name>
</gene>
<reference key="1">
    <citation type="journal article" date="2000" name="Nature">
        <title>Complete genome sequence of Pseudomonas aeruginosa PAO1, an opportunistic pathogen.</title>
        <authorList>
            <person name="Stover C.K."/>
            <person name="Pham X.-Q.T."/>
            <person name="Erwin A.L."/>
            <person name="Mizoguchi S.D."/>
            <person name="Warrener P."/>
            <person name="Hickey M.J."/>
            <person name="Brinkman F.S.L."/>
            <person name="Hufnagle W.O."/>
            <person name="Kowalik D.J."/>
            <person name="Lagrou M."/>
            <person name="Garber R.L."/>
            <person name="Goltry L."/>
            <person name="Tolentino E."/>
            <person name="Westbrock-Wadman S."/>
            <person name="Yuan Y."/>
            <person name="Brody L.L."/>
            <person name="Coulter S.N."/>
            <person name="Folger K.R."/>
            <person name="Kas A."/>
            <person name="Larbig K."/>
            <person name="Lim R.M."/>
            <person name="Smith K.A."/>
            <person name="Spencer D.H."/>
            <person name="Wong G.K.-S."/>
            <person name="Wu Z."/>
            <person name="Paulsen I.T."/>
            <person name="Reizer J."/>
            <person name="Saier M.H. Jr."/>
            <person name="Hancock R.E.W."/>
            <person name="Lory S."/>
            <person name="Olson M.V."/>
        </authorList>
    </citation>
    <scope>NUCLEOTIDE SEQUENCE [LARGE SCALE GENOMIC DNA]</scope>
    <source>
        <strain>ATCC 15692 / DSM 22644 / CIP 104116 / JCM 14847 / LMG 12228 / 1C / PRS 101 / PAO1</strain>
    </source>
</reference>
<feature type="chain" id="PRO_0000286272" description="Spermidine/putrescine import ATP-binding protein PotA 1">
    <location>
        <begin position="1"/>
        <end position="370"/>
    </location>
</feature>
<feature type="domain" description="ABC transporter" evidence="1">
    <location>
        <begin position="12"/>
        <end position="250"/>
    </location>
</feature>
<feature type="binding site" evidence="1">
    <location>
        <begin position="48"/>
        <end position="55"/>
    </location>
    <ligand>
        <name>ATP</name>
        <dbReference type="ChEBI" id="CHEBI:30616"/>
    </ligand>
</feature>
<name>POTA1_PSEAE</name>
<organism>
    <name type="scientific">Pseudomonas aeruginosa (strain ATCC 15692 / DSM 22644 / CIP 104116 / JCM 14847 / LMG 12228 / 1C / PRS 101 / PAO1)</name>
    <dbReference type="NCBI Taxonomy" id="208964"/>
    <lineage>
        <taxon>Bacteria</taxon>
        <taxon>Pseudomonadati</taxon>
        <taxon>Pseudomonadota</taxon>
        <taxon>Gammaproteobacteria</taxon>
        <taxon>Pseudomonadales</taxon>
        <taxon>Pseudomonadaceae</taxon>
        <taxon>Pseudomonas</taxon>
    </lineage>
</organism>
<comment type="function">
    <text evidence="1">Part of the ABC transporter complex PotABCD involved in spermidine/putrescine import. Responsible for energy coupling to the transport system.</text>
</comment>
<comment type="catalytic activity">
    <reaction evidence="1">
        <text>ATP + H2O + polyamine-[polyamine-binding protein]Side 1 = ADP + phosphate + polyamineSide 2 + [polyamine-binding protein]Side 1.</text>
        <dbReference type="EC" id="7.6.2.11"/>
    </reaction>
</comment>
<comment type="subunit">
    <text evidence="1">The complex is composed of two ATP-binding proteins (PotA), two transmembrane proteins (PotB and PotC) and a solute-binding protein (PotD).</text>
</comment>
<comment type="subcellular location">
    <subcellularLocation>
        <location evidence="1">Cell inner membrane</location>
        <topology evidence="1">Peripheral membrane protein</topology>
    </subcellularLocation>
</comment>
<comment type="similarity">
    <text evidence="1">Belongs to the ABC transporter superfamily. Spermidine/putrescine importer (TC 3.A.1.11.1) family.</text>
</comment>
<dbReference type="EC" id="7.6.2.11" evidence="1"/>
<dbReference type="EMBL" id="AE004091">
    <property type="protein sequence ID" value="AAG03595.1"/>
    <property type="molecule type" value="Genomic_DNA"/>
</dbReference>
<dbReference type="PIR" id="A83621">
    <property type="entry name" value="A83621"/>
</dbReference>
<dbReference type="RefSeq" id="NP_248897.1">
    <property type="nucleotide sequence ID" value="NC_002516.2"/>
</dbReference>
<dbReference type="RefSeq" id="WP_003106181.1">
    <property type="nucleotide sequence ID" value="NZ_QZGE01000024.1"/>
</dbReference>
<dbReference type="SMR" id="Q9I6T2"/>
<dbReference type="STRING" id="208964.PA0206"/>
<dbReference type="PaxDb" id="208964-PA0206"/>
<dbReference type="DNASU" id="879760"/>
<dbReference type="GeneID" id="879760"/>
<dbReference type="KEGG" id="pae:PA0206"/>
<dbReference type="PATRIC" id="fig|208964.12.peg.214"/>
<dbReference type="PseudoCAP" id="PA0206"/>
<dbReference type="HOGENOM" id="CLU_000604_1_1_6"/>
<dbReference type="InParanoid" id="Q9I6T2"/>
<dbReference type="OrthoDB" id="9802264at2"/>
<dbReference type="PhylomeDB" id="Q9I6T2"/>
<dbReference type="BioCyc" id="PAER208964:G1FZ6-208-MONOMER"/>
<dbReference type="Proteomes" id="UP000002438">
    <property type="component" value="Chromosome"/>
</dbReference>
<dbReference type="GO" id="GO:0043190">
    <property type="term" value="C:ATP-binding cassette (ABC) transporter complex"/>
    <property type="evidence" value="ECO:0007669"/>
    <property type="project" value="InterPro"/>
</dbReference>
<dbReference type="GO" id="GO:0015417">
    <property type="term" value="F:ABC-type polyamine transporter activity"/>
    <property type="evidence" value="ECO:0007669"/>
    <property type="project" value="UniProtKB-EC"/>
</dbReference>
<dbReference type="GO" id="GO:0005524">
    <property type="term" value="F:ATP binding"/>
    <property type="evidence" value="ECO:0007669"/>
    <property type="project" value="UniProtKB-KW"/>
</dbReference>
<dbReference type="GO" id="GO:0016887">
    <property type="term" value="F:ATP hydrolysis activity"/>
    <property type="evidence" value="ECO:0007669"/>
    <property type="project" value="InterPro"/>
</dbReference>
<dbReference type="FunFam" id="3.40.50.300:FF:000133">
    <property type="entry name" value="Spermidine/putrescine import ATP-binding protein PotA"/>
    <property type="match status" value="1"/>
</dbReference>
<dbReference type="Gene3D" id="2.40.50.100">
    <property type="match status" value="1"/>
</dbReference>
<dbReference type="Gene3D" id="3.40.50.300">
    <property type="entry name" value="P-loop containing nucleotide triphosphate hydrolases"/>
    <property type="match status" value="1"/>
</dbReference>
<dbReference type="InterPro" id="IPR003593">
    <property type="entry name" value="AAA+_ATPase"/>
</dbReference>
<dbReference type="InterPro" id="IPR050093">
    <property type="entry name" value="ABC_SmlMolc_Importer"/>
</dbReference>
<dbReference type="InterPro" id="IPR003439">
    <property type="entry name" value="ABC_transporter-like_ATP-bd"/>
</dbReference>
<dbReference type="InterPro" id="IPR017871">
    <property type="entry name" value="ABC_transporter-like_CS"/>
</dbReference>
<dbReference type="InterPro" id="IPR008995">
    <property type="entry name" value="Mo/tungstate-bd_C_term_dom"/>
</dbReference>
<dbReference type="InterPro" id="IPR027417">
    <property type="entry name" value="P-loop_NTPase"/>
</dbReference>
<dbReference type="InterPro" id="IPR005893">
    <property type="entry name" value="PotA-like"/>
</dbReference>
<dbReference type="InterPro" id="IPR013611">
    <property type="entry name" value="Transp-assoc_OB_typ2"/>
</dbReference>
<dbReference type="NCBIfam" id="TIGR01187">
    <property type="entry name" value="potA"/>
    <property type="match status" value="1"/>
</dbReference>
<dbReference type="PANTHER" id="PTHR42781">
    <property type="entry name" value="SPERMIDINE/PUTRESCINE IMPORT ATP-BINDING PROTEIN POTA"/>
    <property type="match status" value="1"/>
</dbReference>
<dbReference type="PANTHER" id="PTHR42781:SF4">
    <property type="entry name" value="SPERMIDINE_PUTRESCINE IMPORT ATP-BINDING PROTEIN POTA"/>
    <property type="match status" value="1"/>
</dbReference>
<dbReference type="Pfam" id="PF00005">
    <property type="entry name" value="ABC_tran"/>
    <property type="match status" value="1"/>
</dbReference>
<dbReference type="Pfam" id="PF08402">
    <property type="entry name" value="TOBE_2"/>
    <property type="match status" value="1"/>
</dbReference>
<dbReference type="SMART" id="SM00382">
    <property type="entry name" value="AAA"/>
    <property type="match status" value="1"/>
</dbReference>
<dbReference type="SUPFAM" id="SSF50331">
    <property type="entry name" value="MOP-like"/>
    <property type="match status" value="1"/>
</dbReference>
<dbReference type="SUPFAM" id="SSF52540">
    <property type="entry name" value="P-loop containing nucleoside triphosphate hydrolases"/>
    <property type="match status" value="1"/>
</dbReference>
<dbReference type="PROSITE" id="PS00211">
    <property type="entry name" value="ABC_TRANSPORTER_1"/>
    <property type="match status" value="1"/>
</dbReference>
<dbReference type="PROSITE" id="PS50893">
    <property type="entry name" value="ABC_TRANSPORTER_2"/>
    <property type="match status" value="1"/>
</dbReference>
<dbReference type="PROSITE" id="PS51305">
    <property type="entry name" value="POTA"/>
    <property type="match status" value="1"/>
</dbReference>
<keyword id="KW-0067">ATP-binding</keyword>
<keyword id="KW-0997">Cell inner membrane</keyword>
<keyword id="KW-1003">Cell membrane</keyword>
<keyword id="KW-0472">Membrane</keyword>
<keyword id="KW-0547">Nucleotide-binding</keyword>
<keyword id="KW-1185">Reference proteome</keyword>
<keyword id="KW-1278">Translocase</keyword>
<keyword id="KW-0813">Transport</keyword>
<evidence type="ECO:0000255" key="1">
    <source>
        <dbReference type="HAMAP-Rule" id="MF_01726"/>
    </source>
</evidence>
<proteinExistence type="inferred from homology"/>
<accession>Q9I6T2</accession>
<sequence length="370" mass="40362">MSALHSLRTHAVSIRAVRKVYGDPESGPVALKRVDLDIRDNEFFTLLGPSGCGKTTLLRMIAGFEFPTEGEILLYGENIAARPPFERPVNTVFQHYALFPHMSIAENLAFGLESRPLGRSLGKAEIAERVREMLALVQMERFADRRPGQLSGGQQQRVALARALAPQPRVLLLDEPLSALDLKLRQAMREELKAIQAKTGITFIFVTHDQEEALTMSDRIAVLSEGQVQQVGPPEEIYERPGNRFVADFIGETNFIEAELLQRDGPLALYRGPGGEAFEAAARDGLAAGARVCLSIRPERLDLLAANTGGGLPCTVESQVYLGTDLQYRVRLADGSLLTVRTPNGTARRFATGEAACLAVAKDSASVLLD</sequence>